<accession>B4EUV6</accession>
<keyword id="KW-0067">ATP-binding</keyword>
<keyword id="KW-0963">Cytoplasm</keyword>
<keyword id="KW-0227">DNA damage</keyword>
<keyword id="KW-0233">DNA recombination</keyword>
<keyword id="KW-0234">DNA repair</keyword>
<keyword id="KW-0238">DNA-binding</keyword>
<keyword id="KW-0547">Nucleotide-binding</keyword>
<keyword id="KW-1185">Reference proteome</keyword>
<keyword id="KW-0742">SOS response</keyword>
<protein>
    <recommendedName>
        <fullName evidence="1">Protein RecA</fullName>
    </recommendedName>
    <alternativeName>
        <fullName evidence="1">Recombinase A</fullName>
    </alternativeName>
</protein>
<organism>
    <name type="scientific">Proteus mirabilis (strain HI4320)</name>
    <dbReference type="NCBI Taxonomy" id="529507"/>
    <lineage>
        <taxon>Bacteria</taxon>
        <taxon>Pseudomonadati</taxon>
        <taxon>Pseudomonadota</taxon>
        <taxon>Gammaproteobacteria</taxon>
        <taxon>Enterobacterales</taxon>
        <taxon>Morganellaceae</taxon>
        <taxon>Proteus</taxon>
    </lineage>
</organism>
<name>RECA_PROMH</name>
<dbReference type="EMBL" id="AM942759">
    <property type="protein sequence ID" value="CAR40963.1"/>
    <property type="molecule type" value="Genomic_DNA"/>
</dbReference>
<dbReference type="RefSeq" id="WP_004247401.1">
    <property type="nucleotide sequence ID" value="NC_010554.1"/>
</dbReference>
<dbReference type="SMR" id="B4EUV6"/>
<dbReference type="EnsemblBacteria" id="CAR40963">
    <property type="protein sequence ID" value="CAR40963"/>
    <property type="gene ID" value="PMI0375"/>
</dbReference>
<dbReference type="GeneID" id="6803560"/>
<dbReference type="KEGG" id="pmr:PMI0375"/>
<dbReference type="eggNOG" id="COG0468">
    <property type="taxonomic scope" value="Bacteria"/>
</dbReference>
<dbReference type="HOGENOM" id="CLU_040469_3_2_6"/>
<dbReference type="Proteomes" id="UP000008319">
    <property type="component" value="Chromosome"/>
</dbReference>
<dbReference type="GO" id="GO:0005829">
    <property type="term" value="C:cytosol"/>
    <property type="evidence" value="ECO:0007669"/>
    <property type="project" value="TreeGrafter"/>
</dbReference>
<dbReference type="GO" id="GO:0005524">
    <property type="term" value="F:ATP binding"/>
    <property type="evidence" value="ECO:0007669"/>
    <property type="project" value="UniProtKB-UniRule"/>
</dbReference>
<dbReference type="GO" id="GO:0016887">
    <property type="term" value="F:ATP hydrolysis activity"/>
    <property type="evidence" value="ECO:0007669"/>
    <property type="project" value="InterPro"/>
</dbReference>
<dbReference type="GO" id="GO:0140664">
    <property type="term" value="F:ATP-dependent DNA damage sensor activity"/>
    <property type="evidence" value="ECO:0007669"/>
    <property type="project" value="InterPro"/>
</dbReference>
<dbReference type="GO" id="GO:0003684">
    <property type="term" value="F:damaged DNA binding"/>
    <property type="evidence" value="ECO:0007669"/>
    <property type="project" value="UniProtKB-UniRule"/>
</dbReference>
<dbReference type="GO" id="GO:0003697">
    <property type="term" value="F:single-stranded DNA binding"/>
    <property type="evidence" value="ECO:0007669"/>
    <property type="project" value="UniProtKB-UniRule"/>
</dbReference>
<dbReference type="GO" id="GO:0006310">
    <property type="term" value="P:DNA recombination"/>
    <property type="evidence" value="ECO:0007669"/>
    <property type="project" value="UniProtKB-UniRule"/>
</dbReference>
<dbReference type="GO" id="GO:0006281">
    <property type="term" value="P:DNA repair"/>
    <property type="evidence" value="ECO:0007669"/>
    <property type="project" value="UniProtKB-UniRule"/>
</dbReference>
<dbReference type="GO" id="GO:0009432">
    <property type="term" value="P:SOS response"/>
    <property type="evidence" value="ECO:0007669"/>
    <property type="project" value="UniProtKB-UniRule"/>
</dbReference>
<dbReference type="CDD" id="cd00983">
    <property type="entry name" value="RecA"/>
    <property type="match status" value="1"/>
</dbReference>
<dbReference type="FunFam" id="3.40.50.300:FF:000087">
    <property type="entry name" value="Recombinase RecA"/>
    <property type="match status" value="1"/>
</dbReference>
<dbReference type="Gene3D" id="3.40.50.300">
    <property type="entry name" value="P-loop containing nucleotide triphosphate hydrolases"/>
    <property type="match status" value="1"/>
</dbReference>
<dbReference type="HAMAP" id="MF_00268">
    <property type="entry name" value="RecA"/>
    <property type="match status" value="1"/>
</dbReference>
<dbReference type="InterPro" id="IPR003593">
    <property type="entry name" value="AAA+_ATPase"/>
</dbReference>
<dbReference type="InterPro" id="IPR013765">
    <property type="entry name" value="DNA_recomb/repair_RecA"/>
</dbReference>
<dbReference type="InterPro" id="IPR020584">
    <property type="entry name" value="DNA_recomb/repair_RecA_CS"/>
</dbReference>
<dbReference type="InterPro" id="IPR027417">
    <property type="entry name" value="P-loop_NTPase"/>
</dbReference>
<dbReference type="InterPro" id="IPR049261">
    <property type="entry name" value="RecA-like_C"/>
</dbReference>
<dbReference type="InterPro" id="IPR049428">
    <property type="entry name" value="RecA-like_N"/>
</dbReference>
<dbReference type="InterPro" id="IPR020588">
    <property type="entry name" value="RecA_ATP-bd"/>
</dbReference>
<dbReference type="InterPro" id="IPR023400">
    <property type="entry name" value="RecA_C_sf"/>
</dbReference>
<dbReference type="InterPro" id="IPR020587">
    <property type="entry name" value="RecA_monomer-monomer_interface"/>
</dbReference>
<dbReference type="NCBIfam" id="TIGR02012">
    <property type="entry name" value="tigrfam_recA"/>
    <property type="match status" value="1"/>
</dbReference>
<dbReference type="PANTHER" id="PTHR45900:SF1">
    <property type="entry name" value="MITOCHONDRIAL DNA REPAIR PROTEIN RECA HOMOLOG-RELATED"/>
    <property type="match status" value="1"/>
</dbReference>
<dbReference type="PANTHER" id="PTHR45900">
    <property type="entry name" value="RECA"/>
    <property type="match status" value="1"/>
</dbReference>
<dbReference type="Pfam" id="PF00154">
    <property type="entry name" value="RecA"/>
    <property type="match status" value="1"/>
</dbReference>
<dbReference type="Pfam" id="PF21096">
    <property type="entry name" value="RecA_C"/>
    <property type="match status" value="1"/>
</dbReference>
<dbReference type="PRINTS" id="PR00142">
    <property type="entry name" value="RECA"/>
</dbReference>
<dbReference type="SMART" id="SM00382">
    <property type="entry name" value="AAA"/>
    <property type="match status" value="1"/>
</dbReference>
<dbReference type="SUPFAM" id="SSF52540">
    <property type="entry name" value="P-loop containing nucleoside triphosphate hydrolases"/>
    <property type="match status" value="1"/>
</dbReference>
<dbReference type="SUPFAM" id="SSF54752">
    <property type="entry name" value="RecA protein, C-terminal domain"/>
    <property type="match status" value="1"/>
</dbReference>
<dbReference type="PROSITE" id="PS00321">
    <property type="entry name" value="RECA_1"/>
    <property type="match status" value="1"/>
</dbReference>
<dbReference type="PROSITE" id="PS50162">
    <property type="entry name" value="RECA_2"/>
    <property type="match status" value="1"/>
</dbReference>
<dbReference type="PROSITE" id="PS50163">
    <property type="entry name" value="RECA_3"/>
    <property type="match status" value="1"/>
</dbReference>
<sequence length="355" mass="38219">MAIDENKQKALAAALGQIEKQFGKGSIMRLGEDRSMNVETISTGSLSLDVALGAGGLPRGRIVEIYGPESSGKTTLTLQVIASAQREGKICAFIDAEHALDPIYAQKLGVDIDNLLCSQPDTGEQALEICDALSRSGAVDVIVVDSVAALTPKAEIEGEIGDSHVGLAARMMSQAMRKLAGNLKNSNTLLIFINQIRMKIGVMFGNPETTTGGNALKFYASVRLDIRRIGSVKNGDEVIGSETRVKVVKNKVAAPFKQAEFQIMYGEGINTYGELIDLGVKHKLVEKAGAWYSYNGEKIGQGKANATNYLKEHPEMYNELNTKLREMLLNHAGEFTSAADFAGEESDSDADDTKE</sequence>
<feature type="chain" id="PRO_1000114355" description="Protein RecA">
    <location>
        <begin position="1"/>
        <end position="355"/>
    </location>
</feature>
<feature type="binding site" evidence="1">
    <location>
        <begin position="67"/>
        <end position="74"/>
    </location>
    <ligand>
        <name>ATP</name>
        <dbReference type="ChEBI" id="CHEBI:30616"/>
    </ligand>
</feature>
<gene>
    <name evidence="1" type="primary">recA</name>
    <name type="ordered locus">PMI0375</name>
</gene>
<comment type="function">
    <text evidence="1">Can catalyze the hydrolysis of ATP in the presence of single-stranded DNA, the ATP-dependent uptake of single-stranded DNA by duplex DNA, and the ATP-dependent hybridization of homologous single-stranded DNAs. It interacts with LexA causing its activation and leading to its autocatalytic cleavage.</text>
</comment>
<comment type="subcellular location">
    <subcellularLocation>
        <location evidence="1">Cytoplasm</location>
    </subcellularLocation>
</comment>
<comment type="similarity">
    <text evidence="1">Belongs to the RecA family.</text>
</comment>
<reference key="1">
    <citation type="journal article" date="2008" name="J. Bacteriol.">
        <title>Complete genome sequence of uropathogenic Proteus mirabilis, a master of both adherence and motility.</title>
        <authorList>
            <person name="Pearson M.M."/>
            <person name="Sebaihia M."/>
            <person name="Churcher C."/>
            <person name="Quail M.A."/>
            <person name="Seshasayee A.S."/>
            <person name="Luscombe N.M."/>
            <person name="Abdellah Z."/>
            <person name="Arrosmith C."/>
            <person name="Atkin B."/>
            <person name="Chillingworth T."/>
            <person name="Hauser H."/>
            <person name="Jagels K."/>
            <person name="Moule S."/>
            <person name="Mungall K."/>
            <person name="Norbertczak H."/>
            <person name="Rabbinowitsch E."/>
            <person name="Walker D."/>
            <person name="Whithead S."/>
            <person name="Thomson N.R."/>
            <person name="Rather P.N."/>
            <person name="Parkhill J."/>
            <person name="Mobley H.L.T."/>
        </authorList>
    </citation>
    <scope>NUCLEOTIDE SEQUENCE [LARGE SCALE GENOMIC DNA]</scope>
    <source>
        <strain>HI4320</strain>
    </source>
</reference>
<evidence type="ECO:0000255" key="1">
    <source>
        <dbReference type="HAMAP-Rule" id="MF_00268"/>
    </source>
</evidence>
<proteinExistence type="inferred from homology"/>